<organism>
    <name type="scientific">Neurospora crassa (strain ATCC 24698 / 74-OR23-1A / CBS 708.71 / DSM 1257 / FGSC 987)</name>
    <dbReference type="NCBI Taxonomy" id="367110"/>
    <lineage>
        <taxon>Eukaryota</taxon>
        <taxon>Fungi</taxon>
        <taxon>Dikarya</taxon>
        <taxon>Ascomycota</taxon>
        <taxon>Pezizomycotina</taxon>
        <taxon>Sordariomycetes</taxon>
        <taxon>Sordariomycetidae</taxon>
        <taxon>Sordariales</taxon>
        <taxon>Sordariaceae</taxon>
        <taxon>Neurospora</taxon>
    </lineage>
</organism>
<keyword id="KW-0067">ATP-binding</keyword>
<keyword id="KW-0158">Chromosome</keyword>
<keyword id="KW-0227">DNA damage</keyword>
<keyword id="KW-0233">DNA recombination</keyword>
<keyword id="KW-0234">DNA repair</keyword>
<keyword id="KW-0238">DNA-binding</keyword>
<keyword id="KW-0347">Helicase</keyword>
<keyword id="KW-0378">Hydrolase</keyword>
<keyword id="KW-0547">Nucleotide-binding</keyword>
<keyword id="KW-0539">Nucleus</keyword>
<keyword id="KW-1185">Reference proteome</keyword>
<keyword id="KW-0779">Telomere</keyword>
<protein>
    <recommendedName>
        <fullName>ATP-dependent DNA helicase II subunit 2</fullName>
        <ecNumber>3.6.4.12</ecNumber>
    </recommendedName>
    <alternativeName>
        <fullName>ATP-dependent DNA helicase II subunit Ku80</fullName>
    </alternativeName>
    <alternativeName>
        <fullName>Protein mus-52</fullName>
    </alternativeName>
</protein>
<comment type="function">
    <text evidence="1">Single-stranded DNA-dependent ATP-dependent helicase. Involved in non-homologous end joining (NHEJ) DNA double strand break repair. DNA-binding is sequence-independent but has a high affinity to nicks in double-stranded DNA and to the ends of duplex DNA. Binds to naturally occurring chromosomal ends, and therefore provides chromosomal end protection. Required also for telomere recombination to repair telomeric ends in the absence of telomerase. ku70, of the ku70/ku80 heterodimer, binds to the stem loop of tlc1, the RNA component of telomerase. Involved in telomere maintenance. Interacts with telomeric repeats and subtelomeric sequences thereby controlling telomere length and protecting against subtelomeric rearrangement. Maintains telomeric chromatin, which is involved in silencing the expression of genes located at the telomere. Required for mating-type switching (By similarity).</text>
</comment>
<comment type="catalytic activity">
    <reaction>
        <text>ATP + H2O = ADP + phosphate + H(+)</text>
        <dbReference type="Rhea" id="RHEA:13065"/>
        <dbReference type="ChEBI" id="CHEBI:15377"/>
        <dbReference type="ChEBI" id="CHEBI:15378"/>
        <dbReference type="ChEBI" id="CHEBI:30616"/>
        <dbReference type="ChEBI" id="CHEBI:43474"/>
        <dbReference type="ChEBI" id="CHEBI:456216"/>
        <dbReference type="EC" id="3.6.4.12"/>
    </reaction>
</comment>
<comment type="subunit">
    <text evidence="1">Heterodimer of mus-51/ku70 and mus-52/ku80.</text>
</comment>
<comment type="subcellular location">
    <subcellularLocation>
        <location evidence="1">Nucleus</location>
    </subcellularLocation>
    <subcellularLocation>
        <location evidence="1">Chromosome</location>
        <location evidence="1">Telomere</location>
    </subcellularLocation>
</comment>
<comment type="similarity">
    <text evidence="2">Belongs to the ku80 family.</text>
</comment>
<comment type="sequence caution" evidence="2">
    <conflict type="erroneous gene model prediction">
        <sequence resource="EMBL-CDS" id="BAD16623"/>
    </conflict>
</comment>
<comment type="sequence caution" evidence="2">
    <conflict type="erroneous initiation">
        <sequence resource="EMBL-CDS" id="EAA27151"/>
    </conflict>
    <text>Extended N-terminus.</text>
</comment>
<proteinExistence type="inferred from homology"/>
<accession>Q7RX73</accession>
<evidence type="ECO:0000250" key="1"/>
<evidence type="ECO:0000305" key="2"/>
<dbReference type="EC" id="3.6.4.12"/>
<dbReference type="EMBL" id="AB177395">
    <property type="protein sequence ID" value="BAD16623.1"/>
    <property type="status" value="ALT_SEQ"/>
    <property type="molecule type" value="Genomic_DNA"/>
</dbReference>
<dbReference type="EMBL" id="CM002238">
    <property type="protein sequence ID" value="EAA27151.3"/>
    <property type="status" value="ALT_INIT"/>
    <property type="molecule type" value="Genomic_DNA"/>
</dbReference>
<dbReference type="RefSeq" id="XP_956387.3">
    <property type="nucleotide sequence ID" value="XM_951294.3"/>
</dbReference>
<dbReference type="SMR" id="Q7RX73"/>
<dbReference type="FunCoup" id="Q7RX73">
    <property type="interactions" value="121"/>
</dbReference>
<dbReference type="STRING" id="367110.Q7RX73"/>
<dbReference type="PaxDb" id="5141-EFNCRP00000000459"/>
<dbReference type="EnsemblFungi" id="EAA27151">
    <property type="protein sequence ID" value="EAA27151"/>
    <property type="gene ID" value="NCU00077"/>
</dbReference>
<dbReference type="GeneID" id="3872525"/>
<dbReference type="KEGG" id="ncr:NCU00077"/>
<dbReference type="HOGENOM" id="CLU_010975_1_1_1"/>
<dbReference type="InParanoid" id="Q7RX73"/>
<dbReference type="OrthoDB" id="30826at2759"/>
<dbReference type="Proteomes" id="UP000001805">
    <property type="component" value="Chromosome 3, Linkage Group III"/>
</dbReference>
<dbReference type="GO" id="GO:0000781">
    <property type="term" value="C:chromosome, telomeric region"/>
    <property type="evidence" value="ECO:0007669"/>
    <property type="project" value="UniProtKB-SubCell"/>
</dbReference>
<dbReference type="GO" id="GO:0043564">
    <property type="term" value="C:Ku70:Ku80 complex"/>
    <property type="evidence" value="ECO:0000318"/>
    <property type="project" value="GO_Central"/>
</dbReference>
<dbReference type="GO" id="GO:0005524">
    <property type="term" value="F:ATP binding"/>
    <property type="evidence" value="ECO:0007669"/>
    <property type="project" value="UniProtKB-KW"/>
</dbReference>
<dbReference type="GO" id="GO:0016887">
    <property type="term" value="F:ATP hydrolysis activity"/>
    <property type="evidence" value="ECO:0007669"/>
    <property type="project" value="RHEA"/>
</dbReference>
<dbReference type="GO" id="GO:0003684">
    <property type="term" value="F:damaged DNA binding"/>
    <property type="evidence" value="ECO:0007669"/>
    <property type="project" value="InterPro"/>
</dbReference>
<dbReference type="GO" id="GO:0004386">
    <property type="term" value="F:helicase activity"/>
    <property type="evidence" value="ECO:0007669"/>
    <property type="project" value="UniProtKB-KW"/>
</dbReference>
<dbReference type="GO" id="GO:0042162">
    <property type="term" value="F:telomeric DNA binding"/>
    <property type="evidence" value="ECO:0000318"/>
    <property type="project" value="GO_Central"/>
</dbReference>
<dbReference type="GO" id="GO:0006310">
    <property type="term" value="P:DNA recombination"/>
    <property type="evidence" value="ECO:0007669"/>
    <property type="project" value="UniProtKB-KW"/>
</dbReference>
<dbReference type="GO" id="GO:0006303">
    <property type="term" value="P:double-strand break repair via nonhomologous end joining"/>
    <property type="evidence" value="ECO:0000318"/>
    <property type="project" value="GO_Central"/>
</dbReference>
<dbReference type="GO" id="GO:0000723">
    <property type="term" value="P:telomere maintenance"/>
    <property type="evidence" value="ECO:0000318"/>
    <property type="project" value="GO_Central"/>
</dbReference>
<dbReference type="CDD" id="cd00873">
    <property type="entry name" value="KU80"/>
    <property type="match status" value="1"/>
</dbReference>
<dbReference type="CDD" id="cd01458">
    <property type="entry name" value="vWA_ku"/>
    <property type="match status" value="1"/>
</dbReference>
<dbReference type="FunFam" id="1.25.40.240:FF:000002">
    <property type="entry name" value="ATP-dependent DNA helicase II subunit 2"/>
    <property type="match status" value="1"/>
</dbReference>
<dbReference type="FunFam" id="2.40.290.10:FF:000008">
    <property type="entry name" value="ATP-dependent DNA helicase II subunit 2"/>
    <property type="match status" value="1"/>
</dbReference>
<dbReference type="FunFam" id="3.40.50.410:FF:000073">
    <property type="entry name" value="ATP-dependent DNA helicase II subunit 2"/>
    <property type="match status" value="1"/>
</dbReference>
<dbReference type="FunFam" id="1.10.1600.10:FF:000002">
    <property type="entry name" value="X-ray repair cross-complementing protein 5"/>
    <property type="match status" value="1"/>
</dbReference>
<dbReference type="Gene3D" id="1.10.1600.10">
    <property type="match status" value="1"/>
</dbReference>
<dbReference type="Gene3D" id="2.40.290.10">
    <property type="match status" value="1"/>
</dbReference>
<dbReference type="Gene3D" id="1.25.40.240">
    <property type="entry name" value="Ku, C-terminal domain"/>
    <property type="match status" value="1"/>
</dbReference>
<dbReference type="Gene3D" id="3.40.50.410">
    <property type="entry name" value="von Willebrand factor, type A domain"/>
    <property type="match status" value="1"/>
</dbReference>
<dbReference type="InterPro" id="IPR006164">
    <property type="entry name" value="Ku70/Ku80_beta-barrel_dom"/>
</dbReference>
<dbReference type="InterPro" id="IPR024193">
    <property type="entry name" value="Ku80"/>
</dbReference>
<dbReference type="InterPro" id="IPR036494">
    <property type="entry name" value="Ku_C_sf"/>
</dbReference>
<dbReference type="InterPro" id="IPR005161">
    <property type="entry name" value="Ku_N"/>
</dbReference>
<dbReference type="InterPro" id="IPR014893">
    <property type="entry name" value="Ku_PK_bind"/>
</dbReference>
<dbReference type="InterPro" id="IPR016194">
    <property type="entry name" value="SPOC-like_C_dom_sf"/>
</dbReference>
<dbReference type="InterPro" id="IPR002035">
    <property type="entry name" value="VWF_A"/>
</dbReference>
<dbReference type="InterPro" id="IPR036465">
    <property type="entry name" value="vWFA_dom_sf"/>
</dbReference>
<dbReference type="PANTHER" id="PTHR12604">
    <property type="entry name" value="KU AUTOANTIGEN DNA HELICASE"/>
    <property type="match status" value="1"/>
</dbReference>
<dbReference type="PANTHER" id="PTHR12604:SF4">
    <property type="entry name" value="X-RAY REPAIR CROSS-COMPLEMENTING PROTEIN 5"/>
    <property type="match status" value="1"/>
</dbReference>
<dbReference type="Pfam" id="PF02735">
    <property type="entry name" value="Ku"/>
    <property type="match status" value="1"/>
</dbReference>
<dbReference type="Pfam" id="PF03731">
    <property type="entry name" value="Ku_N"/>
    <property type="match status" value="1"/>
</dbReference>
<dbReference type="Pfam" id="PF08785">
    <property type="entry name" value="Ku_PK_bind"/>
    <property type="match status" value="1"/>
</dbReference>
<dbReference type="PIRSF" id="PIRSF016570">
    <property type="entry name" value="Ku80"/>
    <property type="match status" value="1"/>
</dbReference>
<dbReference type="SMART" id="SM00559">
    <property type="entry name" value="Ku78"/>
    <property type="match status" value="1"/>
</dbReference>
<dbReference type="SUPFAM" id="SSF101420">
    <property type="entry name" value="C-terminal domain of Ku80"/>
    <property type="match status" value="1"/>
</dbReference>
<dbReference type="SUPFAM" id="SSF100939">
    <property type="entry name" value="SPOC domain-like"/>
    <property type="match status" value="1"/>
</dbReference>
<dbReference type="SUPFAM" id="SSF53300">
    <property type="entry name" value="vWA-like"/>
    <property type="match status" value="1"/>
</dbReference>
<sequence length="725" mass="80976">MADKEATVYVIDLGESMADCHNGRNESDLEFGMRYIWDKITTTVAASRKTWNVGVVGLNTDETNNNENREEYQGYENISVLQELGPMTMASLRALKSKIEPSSTSSADAISAIVVALRMIQTFTKKLKYKRKIIVVTNGESPIDDDQSEEVANMLNDVGIELIVLGVDFDDAEYGFKEEDKPRHKEQNEKILKTLVDHCESGAFGTMAQAVEELATPRIKSVRPFKAYDGPLTLGDPQKYPSALSIQVERYFKTKRATPPSASNVANPNGPPQTQVWNEDDGVPFSGVGLQPVKQLRTYRIEDSKAAGGKKDVDMEDLAKAYQYGRTVVPFGKSEEDYLKYETTKSFTIIGFVPMSSYEPFLNMGETGLIVAQKVNEEAELGLSALIHALHELESYAVARYVNKDKAPPQILLLKPNPAIEDDIECLYDIPLPFAEDVRSYQFPPLDKVLTITGNVLTEHRLLPNNDLQQAMSDYVDAMDLTEYGQDDDGHPAEYAPIDDLYNPVIHHMNQAIRNRAVNPDAPLPPVAEILTRFTHPPEPLLAKAKTEIDGLIQAAEVKKVPPKVQGKRGRKDTVKPLSGLDIDALLSETRPRTKKTPIISTENAIPEFKQILETAEDDETIEIAAKQMGNIICKLVSDSFADVLYPRAAENLRVMREELINMEVPTLYNKYITKLKESLLSGNLNGDRREMWFRWIVGGRLGLITQDESEVSEVSENEAKAFLK</sequence>
<gene>
    <name type="primary">mus-52</name>
    <name type="synonym">ku80</name>
    <name type="ORF">NCU00077</name>
</gene>
<feature type="chain" id="PRO_0000278354" description="ATP-dependent DNA helicase II subunit 2">
    <location>
        <begin position="1"/>
        <end position="725"/>
    </location>
</feature>
<feature type="domain" description="Ku">
    <location>
        <begin position="232"/>
        <end position="478"/>
    </location>
</feature>
<name>KU80_NEUCR</name>
<reference key="1">
    <citation type="journal article" date="2004" name="Proc. Natl. Acad. Sci. U.S.A.">
        <title>Highly efficient gene replacements in Neurospora strains deficient for nonhomologous end-joining.</title>
        <authorList>
            <person name="Ninomiya Y."/>
            <person name="Suzuki K."/>
            <person name="Ishii C."/>
            <person name="Inoue H."/>
        </authorList>
    </citation>
    <scope>NUCLEOTIDE SEQUENCE [GENOMIC DNA]</scope>
</reference>
<reference key="2">
    <citation type="journal article" date="2003" name="Nature">
        <title>The genome sequence of the filamentous fungus Neurospora crassa.</title>
        <authorList>
            <person name="Galagan J.E."/>
            <person name="Calvo S.E."/>
            <person name="Borkovich K.A."/>
            <person name="Selker E.U."/>
            <person name="Read N.D."/>
            <person name="Jaffe D.B."/>
            <person name="FitzHugh W."/>
            <person name="Ma L.-J."/>
            <person name="Smirnov S."/>
            <person name="Purcell S."/>
            <person name="Rehman B."/>
            <person name="Elkins T."/>
            <person name="Engels R."/>
            <person name="Wang S."/>
            <person name="Nielsen C.B."/>
            <person name="Butler J."/>
            <person name="Endrizzi M."/>
            <person name="Qui D."/>
            <person name="Ianakiev P."/>
            <person name="Bell-Pedersen D."/>
            <person name="Nelson M.A."/>
            <person name="Werner-Washburne M."/>
            <person name="Selitrennikoff C.P."/>
            <person name="Kinsey J.A."/>
            <person name="Braun E.L."/>
            <person name="Zelter A."/>
            <person name="Schulte U."/>
            <person name="Kothe G.O."/>
            <person name="Jedd G."/>
            <person name="Mewes H.-W."/>
            <person name="Staben C."/>
            <person name="Marcotte E."/>
            <person name="Greenberg D."/>
            <person name="Roy A."/>
            <person name="Foley K."/>
            <person name="Naylor J."/>
            <person name="Stange-Thomann N."/>
            <person name="Barrett R."/>
            <person name="Gnerre S."/>
            <person name="Kamal M."/>
            <person name="Kamvysselis M."/>
            <person name="Mauceli E.W."/>
            <person name="Bielke C."/>
            <person name="Rudd S."/>
            <person name="Frishman D."/>
            <person name="Krystofova S."/>
            <person name="Rasmussen C."/>
            <person name="Metzenberg R.L."/>
            <person name="Perkins D.D."/>
            <person name="Kroken S."/>
            <person name="Cogoni C."/>
            <person name="Macino G."/>
            <person name="Catcheside D.E.A."/>
            <person name="Li W."/>
            <person name="Pratt R.J."/>
            <person name="Osmani S.A."/>
            <person name="DeSouza C.P.C."/>
            <person name="Glass N.L."/>
            <person name="Orbach M.J."/>
            <person name="Berglund J.A."/>
            <person name="Voelker R."/>
            <person name="Yarden O."/>
            <person name="Plamann M."/>
            <person name="Seiler S."/>
            <person name="Dunlap J.C."/>
            <person name="Radford A."/>
            <person name="Aramayo R."/>
            <person name="Natvig D.O."/>
            <person name="Alex L.A."/>
            <person name="Mannhaupt G."/>
            <person name="Ebbole D.J."/>
            <person name="Freitag M."/>
            <person name="Paulsen I."/>
            <person name="Sachs M.S."/>
            <person name="Lander E.S."/>
            <person name="Nusbaum C."/>
            <person name="Birren B.W."/>
        </authorList>
    </citation>
    <scope>NUCLEOTIDE SEQUENCE [LARGE SCALE GENOMIC DNA]</scope>
    <source>
        <strain>ATCC 24698 / 74-OR23-1A / CBS 708.71 / DSM 1257 / FGSC 987</strain>
    </source>
</reference>